<reference key="1">
    <citation type="journal article" date="2010" name="Genome Biol.">
        <title>Structure and dynamics of the pan-genome of Streptococcus pneumoniae and closely related species.</title>
        <authorList>
            <person name="Donati C."/>
            <person name="Hiller N.L."/>
            <person name="Tettelin H."/>
            <person name="Muzzi A."/>
            <person name="Croucher N.J."/>
            <person name="Angiuoli S.V."/>
            <person name="Oggioni M."/>
            <person name="Dunning Hotopp J.C."/>
            <person name="Hu F.Z."/>
            <person name="Riley D.R."/>
            <person name="Covacci A."/>
            <person name="Mitchell T.J."/>
            <person name="Bentley S.D."/>
            <person name="Kilian M."/>
            <person name="Ehrlich G.D."/>
            <person name="Rappuoli R."/>
            <person name="Moxon E.R."/>
            <person name="Masignani V."/>
        </authorList>
    </citation>
    <scope>NUCLEOTIDE SEQUENCE [LARGE SCALE GENOMIC DNA]</scope>
    <source>
        <strain>Hungary19A-6</strain>
    </source>
</reference>
<keyword id="KW-0687">Ribonucleoprotein</keyword>
<keyword id="KW-0689">Ribosomal protein</keyword>
<keyword id="KW-0694">RNA-binding</keyword>
<keyword id="KW-0699">rRNA-binding</keyword>
<keyword id="KW-0820">tRNA-binding</keyword>
<protein>
    <recommendedName>
        <fullName evidence="1">Large ribosomal subunit protein uL16</fullName>
    </recommendedName>
    <alternativeName>
        <fullName evidence="2">50S ribosomal protein L16</fullName>
    </alternativeName>
</protein>
<proteinExistence type="inferred from homology"/>
<feature type="chain" id="PRO_1000143036" description="Large ribosomal subunit protein uL16">
    <location>
        <begin position="1"/>
        <end position="137"/>
    </location>
</feature>
<evidence type="ECO:0000255" key="1">
    <source>
        <dbReference type="HAMAP-Rule" id="MF_01342"/>
    </source>
</evidence>
<evidence type="ECO:0000305" key="2"/>
<name>RL16_STRPI</name>
<dbReference type="EMBL" id="CP000936">
    <property type="protein sequence ID" value="ACA36886.1"/>
    <property type="molecule type" value="Genomic_DNA"/>
</dbReference>
<dbReference type="RefSeq" id="WP_000960946.1">
    <property type="nucleotide sequence ID" value="NC_010380.1"/>
</dbReference>
<dbReference type="SMR" id="B1I8K5"/>
<dbReference type="GeneID" id="93738964"/>
<dbReference type="KEGG" id="spv:SPH_0330"/>
<dbReference type="HOGENOM" id="CLU_078858_2_1_9"/>
<dbReference type="Proteomes" id="UP000002163">
    <property type="component" value="Chromosome"/>
</dbReference>
<dbReference type="GO" id="GO:0022625">
    <property type="term" value="C:cytosolic large ribosomal subunit"/>
    <property type="evidence" value="ECO:0007669"/>
    <property type="project" value="TreeGrafter"/>
</dbReference>
<dbReference type="GO" id="GO:0019843">
    <property type="term" value="F:rRNA binding"/>
    <property type="evidence" value="ECO:0007669"/>
    <property type="project" value="UniProtKB-UniRule"/>
</dbReference>
<dbReference type="GO" id="GO:0003735">
    <property type="term" value="F:structural constituent of ribosome"/>
    <property type="evidence" value="ECO:0007669"/>
    <property type="project" value="InterPro"/>
</dbReference>
<dbReference type="GO" id="GO:0000049">
    <property type="term" value="F:tRNA binding"/>
    <property type="evidence" value="ECO:0007669"/>
    <property type="project" value="UniProtKB-KW"/>
</dbReference>
<dbReference type="GO" id="GO:0006412">
    <property type="term" value="P:translation"/>
    <property type="evidence" value="ECO:0007669"/>
    <property type="project" value="UniProtKB-UniRule"/>
</dbReference>
<dbReference type="CDD" id="cd01433">
    <property type="entry name" value="Ribosomal_L16_L10e"/>
    <property type="match status" value="1"/>
</dbReference>
<dbReference type="FunFam" id="3.90.1170.10:FF:000001">
    <property type="entry name" value="50S ribosomal protein L16"/>
    <property type="match status" value="1"/>
</dbReference>
<dbReference type="Gene3D" id="3.90.1170.10">
    <property type="entry name" value="Ribosomal protein L10e/L16"/>
    <property type="match status" value="1"/>
</dbReference>
<dbReference type="HAMAP" id="MF_01342">
    <property type="entry name" value="Ribosomal_uL16"/>
    <property type="match status" value="1"/>
</dbReference>
<dbReference type="InterPro" id="IPR047873">
    <property type="entry name" value="Ribosomal_uL16"/>
</dbReference>
<dbReference type="InterPro" id="IPR000114">
    <property type="entry name" value="Ribosomal_uL16_bact-type"/>
</dbReference>
<dbReference type="InterPro" id="IPR020798">
    <property type="entry name" value="Ribosomal_uL16_CS"/>
</dbReference>
<dbReference type="InterPro" id="IPR016180">
    <property type="entry name" value="Ribosomal_uL16_dom"/>
</dbReference>
<dbReference type="InterPro" id="IPR036920">
    <property type="entry name" value="Ribosomal_uL16_sf"/>
</dbReference>
<dbReference type="NCBIfam" id="TIGR01164">
    <property type="entry name" value="rplP_bact"/>
    <property type="match status" value="1"/>
</dbReference>
<dbReference type="PANTHER" id="PTHR12220">
    <property type="entry name" value="50S/60S RIBOSOMAL PROTEIN L16"/>
    <property type="match status" value="1"/>
</dbReference>
<dbReference type="PANTHER" id="PTHR12220:SF13">
    <property type="entry name" value="LARGE RIBOSOMAL SUBUNIT PROTEIN UL16M"/>
    <property type="match status" value="1"/>
</dbReference>
<dbReference type="Pfam" id="PF00252">
    <property type="entry name" value="Ribosomal_L16"/>
    <property type="match status" value="1"/>
</dbReference>
<dbReference type="PRINTS" id="PR00060">
    <property type="entry name" value="RIBOSOMALL16"/>
</dbReference>
<dbReference type="SUPFAM" id="SSF54686">
    <property type="entry name" value="Ribosomal protein L16p/L10e"/>
    <property type="match status" value="1"/>
</dbReference>
<dbReference type="PROSITE" id="PS00586">
    <property type="entry name" value="RIBOSOMAL_L16_1"/>
    <property type="match status" value="1"/>
</dbReference>
<dbReference type="PROSITE" id="PS00701">
    <property type="entry name" value="RIBOSOMAL_L16_2"/>
    <property type="match status" value="1"/>
</dbReference>
<sequence length="137" mass="15436">MLVPKRVKHRREFRGKMRGEAKGGKEVAFGEYGLQATTSHWITNRQIEAARIAMTRYMKRGGKVWIKIFPHKSYTAKAIGVRMGSGKGAPEGWVAPVKRGKVMFEIAGVSEEIAREALRLASHKLPVKCKFVKREAE</sequence>
<gene>
    <name evidence="1" type="primary">rplP</name>
    <name type="ordered locus">SPH_0330</name>
</gene>
<comment type="function">
    <text evidence="1">Binds 23S rRNA and is also seen to make contacts with the A and possibly P site tRNAs.</text>
</comment>
<comment type="subunit">
    <text evidence="1">Part of the 50S ribosomal subunit.</text>
</comment>
<comment type="similarity">
    <text evidence="1">Belongs to the universal ribosomal protein uL16 family.</text>
</comment>
<organism>
    <name type="scientific">Streptococcus pneumoniae (strain Hungary19A-6)</name>
    <dbReference type="NCBI Taxonomy" id="487214"/>
    <lineage>
        <taxon>Bacteria</taxon>
        <taxon>Bacillati</taxon>
        <taxon>Bacillota</taxon>
        <taxon>Bacilli</taxon>
        <taxon>Lactobacillales</taxon>
        <taxon>Streptococcaceae</taxon>
        <taxon>Streptococcus</taxon>
    </lineage>
</organism>
<accession>B1I8K5</accession>